<organism>
    <name type="scientific">Periplaneta fuliginosa</name>
    <name type="common">Smokybrown cockroach</name>
    <name type="synonym">Dusky-brown cockroach</name>
    <dbReference type="NCBI Taxonomy" id="36977"/>
    <lineage>
        <taxon>Eukaryota</taxon>
        <taxon>Metazoa</taxon>
        <taxon>Ecdysozoa</taxon>
        <taxon>Arthropoda</taxon>
        <taxon>Hexapoda</taxon>
        <taxon>Insecta</taxon>
        <taxon>Pterygota</taxon>
        <taxon>Neoptera</taxon>
        <taxon>Polyneoptera</taxon>
        <taxon>Dictyoptera</taxon>
        <taxon>Blattodea</taxon>
        <taxon>Blattoidea</taxon>
        <taxon>Blattidae</taxon>
        <taxon>Blattinae</taxon>
        <taxon>Periplaneta</taxon>
    </lineage>
</organism>
<feature type="peptide" id="PRO_0000044335" description="Pyrokinin-4">
    <location>
        <begin position="1"/>
        <end position="12"/>
    </location>
</feature>
<feature type="modified residue" description="Leucine amide" evidence="2">
    <location>
        <position position="12"/>
    </location>
</feature>
<dbReference type="GO" id="GO:0005576">
    <property type="term" value="C:extracellular region"/>
    <property type="evidence" value="ECO:0007669"/>
    <property type="project" value="UniProtKB-SubCell"/>
</dbReference>
<dbReference type="GO" id="GO:0007218">
    <property type="term" value="P:neuropeptide signaling pathway"/>
    <property type="evidence" value="ECO:0007669"/>
    <property type="project" value="UniProtKB-KW"/>
</dbReference>
<name>PPK4_PERFU</name>
<accession>P82690</accession>
<keyword id="KW-0027">Amidation</keyword>
<keyword id="KW-0903">Direct protein sequencing</keyword>
<keyword id="KW-0527">Neuropeptide</keyword>
<keyword id="KW-0964">Secreted</keyword>
<sequence length="12" mass="1439">DHLSHDVYSPRL</sequence>
<protein>
    <recommendedName>
        <fullName>Pyrokinin-4</fullName>
        <shortName>Pef-PK-4</shortName>
    </recommendedName>
    <alternativeName>
        <fullName>YXPRL-amide</fullName>
    </alternativeName>
</protein>
<comment type="function">
    <text evidence="1">Mediates visceral muscle contractile activity (myotropic activity).</text>
</comment>
<comment type="subcellular location">
    <subcellularLocation>
        <location>Secreted</location>
    </subcellularLocation>
</comment>
<comment type="tissue specificity">
    <text evidence="3">Expressed in the brain, subesophageal ganglion and in the retrocerebral complex (mainly corpora allata).</text>
</comment>
<comment type="mass spectrometry" mass="1437.9" method="MALDI" evidence="1"/>
<comment type="similarity">
    <text evidence="4">Belongs to the pyrokinin family.</text>
</comment>
<proteinExistence type="evidence at protein level"/>
<evidence type="ECO:0000269" key="1">
    <source>
    </source>
</evidence>
<evidence type="ECO:0000269" key="2">
    <source>
    </source>
</evidence>
<evidence type="ECO:0000269" key="3">
    <source ref="3"/>
</evidence>
<evidence type="ECO:0000305" key="4"/>
<reference key="1">
    <citation type="journal article" date="2000" name="J. Comp. Neurol.">
        <title>Tagma-specific distribution of FXPRLamides in the nervous system of the American cockroach.</title>
        <authorList>
            <person name="Predel R."/>
            <person name="Eckert M."/>
        </authorList>
    </citation>
    <scope>PROTEIN SEQUENCE</scope>
    <scope>AMIDATION</scope>
    <scope>FUNCTION</scope>
    <scope>MASS SPECTROMETRY</scope>
    <source>
        <tissue>Corpora cardiaca</tissue>
    </source>
</reference>
<reference key="2">
    <citation type="journal article" date="2005" name="Peptides">
        <title>Peptidomics of neurohemal organs from species of the cockroach family Blattidae: how do neuropeptides of closely related species differ?</title>
        <authorList>
            <person name="Predel R."/>
            <person name="Gaede G."/>
        </authorList>
    </citation>
    <scope>PROTEIN SEQUENCE</scope>
    <scope>AMIDATION AT LEU-12</scope>
    <scope>IDENTIFICATION BY MASS SPECTROMETRY</scope>
    <source>
        <tissue>Corpora allata</tissue>
    </source>
</reference>
<reference key="3">
    <citation type="submission" date="2004-11" db="UniProtKB">
        <authorList>
            <person name="Predel R."/>
            <person name="Gaede G."/>
        </authorList>
    </citation>
    <scope>TISSUE SPECIFICITY</scope>
</reference>